<name>PURL_ANAD2</name>
<feature type="chain" id="PRO_1000134891" description="Phosphoribosylformylglycinamidine synthase subunit PurL">
    <location>
        <begin position="1"/>
        <end position="759"/>
    </location>
</feature>
<feature type="active site" evidence="1">
    <location>
        <position position="46"/>
    </location>
</feature>
<feature type="active site" description="Proton acceptor" evidence="1">
    <location>
        <position position="92"/>
    </location>
</feature>
<feature type="binding site" evidence="1">
    <location>
        <position position="49"/>
    </location>
    <ligand>
        <name>ATP</name>
        <dbReference type="ChEBI" id="CHEBI:30616"/>
    </ligand>
</feature>
<feature type="binding site" evidence="1">
    <location>
        <position position="88"/>
    </location>
    <ligand>
        <name>ATP</name>
        <dbReference type="ChEBI" id="CHEBI:30616"/>
    </ligand>
</feature>
<feature type="binding site" evidence="1">
    <location>
        <position position="90"/>
    </location>
    <ligand>
        <name>Mg(2+)</name>
        <dbReference type="ChEBI" id="CHEBI:18420"/>
        <label>1</label>
    </ligand>
</feature>
<feature type="binding site" evidence="1">
    <location>
        <begin position="91"/>
        <end position="94"/>
    </location>
    <ligand>
        <name>substrate</name>
    </ligand>
</feature>
<feature type="binding site" evidence="1">
    <location>
        <position position="113"/>
    </location>
    <ligand>
        <name>substrate</name>
    </ligand>
</feature>
<feature type="binding site" evidence="1">
    <location>
        <position position="114"/>
    </location>
    <ligand>
        <name>Mg(2+)</name>
        <dbReference type="ChEBI" id="CHEBI:18420"/>
        <label>2</label>
    </ligand>
</feature>
<feature type="binding site" evidence="1">
    <location>
        <position position="237"/>
    </location>
    <ligand>
        <name>substrate</name>
    </ligand>
</feature>
<feature type="binding site" evidence="1">
    <location>
        <position position="265"/>
    </location>
    <ligand>
        <name>Mg(2+)</name>
        <dbReference type="ChEBI" id="CHEBI:18420"/>
        <label>2</label>
    </ligand>
</feature>
<feature type="binding site" evidence="1">
    <location>
        <begin position="309"/>
        <end position="311"/>
    </location>
    <ligand>
        <name>substrate</name>
    </ligand>
</feature>
<feature type="binding site" evidence="1">
    <location>
        <position position="498"/>
    </location>
    <ligand>
        <name>ATP</name>
        <dbReference type="ChEBI" id="CHEBI:30616"/>
    </ligand>
</feature>
<feature type="binding site" evidence="1">
    <location>
        <position position="535"/>
    </location>
    <ligand>
        <name>ATP</name>
        <dbReference type="ChEBI" id="CHEBI:30616"/>
    </ligand>
</feature>
<feature type="binding site" evidence="1">
    <location>
        <position position="536"/>
    </location>
    <ligand>
        <name>Mg(2+)</name>
        <dbReference type="ChEBI" id="CHEBI:18420"/>
        <label>1</label>
    </ligand>
</feature>
<feature type="binding site" evidence="1">
    <location>
        <position position="538"/>
    </location>
    <ligand>
        <name>substrate</name>
    </ligand>
</feature>
<sequence>MTEPITPEIVAQHGLKPEEYQRILEHLGRTPTLTELGVFSVMWSEHCSYKSSRVHLKTFPTSGPRVLQGPGENAGVVDLGDGLAAAFKMESHNHPSYIEPYQGAATGVGGILRDVFTMGARPIASLNALRFGDPSHPRTAYLLEGVVAGIGGYGNCMGVPTVGGEVAFHPSYNGNCLVNAFTLGILPADKIFRGTAAGVGNPVMYVGAKTGRDGIHGATMASAEFDASTEEKRPTVQVGDPFMEKLLLEACLELFQTDAVVGIQDMGAAGLTSSSVEMAGRGGNGLDLFLDQVPLREEGMTPYEILLSESQERMLLVAAEGKEELVRSICEKWDLDVAVIGRVTASGRWRAHWRGAVVADLPVDPLTEGAPKYHRPMAPHPALPALHAFDAAALPEPADLGAALLRLLARPTIASKEWVYRQYDHMVRLVGAVRPGGDAAVVRLAVSHDAHAHKGIALSVGVNGRFCFLDPYLGAMHAVAECARNIACVGGEPIAITDCLNFGNPEKPEIMWQFAECVRGIGDACRAFGTPVVSGNVSLYNETEGQGILPTPTVGMVGLVEPVERTCHSTFRDAGDVIALVGSLQGEVGGSEYLSAEHGKEAGRPPALDLAREKAVQETVRRAVRAGLLSSAHDCSEGGLAVALAESCMMHEVPADGSKPAWIGCAVRIPFPVRKDFVLFGEDASRILVSLPKENAARFVDLAQQCGAPVIRLGAVGGDRLEIQGALSVPVEDLARAWRDGIPAVLRRDAAHAGTTAPA</sequence>
<proteinExistence type="inferred from homology"/>
<keyword id="KW-0067">ATP-binding</keyword>
<keyword id="KW-0963">Cytoplasm</keyword>
<keyword id="KW-0436">Ligase</keyword>
<keyword id="KW-0460">Magnesium</keyword>
<keyword id="KW-0479">Metal-binding</keyword>
<keyword id="KW-0547">Nucleotide-binding</keyword>
<keyword id="KW-0658">Purine biosynthesis</keyword>
<gene>
    <name evidence="1" type="primary">purL</name>
    <name type="ordered locus">A2cp1_4369</name>
</gene>
<organism>
    <name type="scientific">Anaeromyxobacter dehalogenans (strain 2CP-1 / ATCC BAA-258)</name>
    <dbReference type="NCBI Taxonomy" id="455488"/>
    <lineage>
        <taxon>Bacteria</taxon>
        <taxon>Pseudomonadati</taxon>
        <taxon>Myxococcota</taxon>
        <taxon>Myxococcia</taxon>
        <taxon>Myxococcales</taxon>
        <taxon>Cystobacterineae</taxon>
        <taxon>Anaeromyxobacteraceae</taxon>
        <taxon>Anaeromyxobacter</taxon>
    </lineage>
</organism>
<protein>
    <recommendedName>
        <fullName evidence="1">Phosphoribosylformylglycinamidine synthase subunit PurL</fullName>
        <shortName evidence="1">FGAM synthase</shortName>
        <ecNumber evidence="1">6.3.5.3</ecNumber>
    </recommendedName>
    <alternativeName>
        <fullName evidence="1">Formylglycinamide ribonucleotide amidotransferase subunit II</fullName>
        <shortName evidence="1">FGAR amidotransferase II</shortName>
        <shortName evidence="1">FGAR-AT II</shortName>
    </alternativeName>
    <alternativeName>
        <fullName evidence="1">Glutamine amidotransferase PurL</fullName>
    </alternativeName>
    <alternativeName>
        <fullName evidence="1">Phosphoribosylformylglycinamidine synthase subunit II</fullName>
    </alternativeName>
</protein>
<comment type="function">
    <text evidence="1">Part of the phosphoribosylformylglycinamidine synthase complex involved in the purines biosynthetic pathway. Catalyzes the ATP-dependent conversion of formylglycinamide ribonucleotide (FGAR) and glutamine to yield formylglycinamidine ribonucleotide (FGAM) and glutamate. The FGAM synthase complex is composed of three subunits. PurQ produces an ammonia molecule by converting glutamine to glutamate. PurL transfers the ammonia molecule to FGAR to form FGAM in an ATP-dependent manner. PurS interacts with PurQ and PurL and is thought to assist in the transfer of the ammonia molecule from PurQ to PurL.</text>
</comment>
<comment type="catalytic activity">
    <reaction evidence="1">
        <text>N(2)-formyl-N(1)-(5-phospho-beta-D-ribosyl)glycinamide + L-glutamine + ATP + H2O = 2-formamido-N(1)-(5-O-phospho-beta-D-ribosyl)acetamidine + L-glutamate + ADP + phosphate + H(+)</text>
        <dbReference type="Rhea" id="RHEA:17129"/>
        <dbReference type="ChEBI" id="CHEBI:15377"/>
        <dbReference type="ChEBI" id="CHEBI:15378"/>
        <dbReference type="ChEBI" id="CHEBI:29985"/>
        <dbReference type="ChEBI" id="CHEBI:30616"/>
        <dbReference type="ChEBI" id="CHEBI:43474"/>
        <dbReference type="ChEBI" id="CHEBI:58359"/>
        <dbReference type="ChEBI" id="CHEBI:147286"/>
        <dbReference type="ChEBI" id="CHEBI:147287"/>
        <dbReference type="ChEBI" id="CHEBI:456216"/>
        <dbReference type="EC" id="6.3.5.3"/>
    </reaction>
</comment>
<comment type="pathway">
    <text evidence="1">Purine metabolism; IMP biosynthesis via de novo pathway; 5-amino-1-(5-phospho-D-ribosyl)imidazole from N(2)-formyl-N(1)-(5-phospho-D-ribosyl)glycinamide: step 1/2.</text>
</comment>
<comment type="subunit">
    <text evidence="1">Monomer. Part of the FGAM synthase complex composed of 1 PurL, 1 PurQ and 2 PurS subunits.</text>
</comment>
<comment type="subcellular location">
    <subcellularLocation>
        <location evidence="1">Cytoplasm</location>
    </subcellularLocation>
</comment>
<comment type="similarity">
    <text evidence="1">Belongs to the FGAMS family.</text>
</comment>
<evidence type="ECO:0000255" key="1">
    <source>
        <dbReference type="HAMAP-Rule" id="MF_00420"/>
    </source>
</evidence>
<dbReference type="EC" id="6.3.5.3" evidence="1"/>
<dbReference type="EMBL" id="CP001359">
    <property type="protein sequence ID" value="ACL67686.1"/>
    <property type="molecule type" value="Genomic_DNA"/>
</dbReference>
<dbReference type="RefSeq" id="WP_015935375.1">
    <property type="nucleotide sequence ID" value="NC_011891.1"/>
</dbReference>
<dbReference type="SMR" id="B8JBS8"/>
<dbReference type="KEGG" id="acp:A2cp1_4369"/>
<dbReference type="HOGENOM" id="CLU_003100_0_1_7"/>
<dbReference type="UniPathway" id="UPA00074">
    <property type="reaction ID" value="UER00128"/>
</dbReference>
<dbReference type="Proteomes" id="UP000007089">
    <property type="component" value="Chromosome"/>
</dbReference>
<dbReference type="GO" id="GO:0005737">
    <property type="term" value="C:cytoplasm"/>
    <property type="evidence" value="ECO:0007669"/>
    <property type="project" value="UniProtKB-SubCell"/>
</dbReference>
<dbReference type="GO" id="GO:0005524">
    <property type="term" value="F:ATP binding"/>
    <property type="evidence" value="ECO:0007669"/>
    <property type="project" value="UniProtKB-UniRule"/>
</dbReference>
<dbReference type="GO" id="GO:0000287">
    <property type="term" value="F:magnesium ion binding"/>
    <property type="evidence" value="ECO:0007669"/>
    <property type="project" value="UniProtKB-UniRule"/>
</dbReference>
<dbReference type="GO" id="GO:0004642">
    <property type="term" value="F:phosphoribosylformylglycinamidine synthase activity"/>
    <property type="evidence" value="ECO:0007669"/>
    <property type="project" value="UniProtKB-UniRule"/>
</dbReference>
<dbReference type="GO" id="GO:0006189">
    <property type="term" value="P:'de novo' IMP biosynthetic process"/>
    <property type="evidence" value="ECO:0007669"/>
    <property type="project" value="UniProtKB-UniRule"/>
</dbReference>
<dbReference type="CDD" id="cd02203">
    <property type="entry name" value="PurL_repeat1"/>
    <property type="match status" value="1"/>
</dbReference>
<dbReference type="CDD" id="cd02204">
    <property type="entry name" value="PurL_repeat2"/>
    <property type="match status" value="1"/>
</dbReference>
<dbReference type="FunFam" id="3.30.1330.10:FF:000004">
    <property type="entry name" value="Phosphoribosylformylglycinamidine synthase subunit PurL"/>
    <property type="match status" value="1"/>
</dbReference>
<dbReference type="Gene3D" id="3.90.650.10">
    <property type="entry name" value="PurM-like C-terminal domain"/>
    <property type="match status" value="2"/>
</dbReference>
<dbReference type="Gene3D" id="3.30.1330.10">
    <property type="entry name" value="PurM-like, N-terminal domain"/>
    <property type="match status" value="2"/>
</dbReference>
<dbReference type="HAMAP" id="MF_00420">
    <property type="entry name" value="PurL_2"/>
    <property type="match status" value="1"/>
</dbReference>
<dbReference type="InterPro" id="IPR010074">
    <property type="entry name" value="PRibForGlyAmidine_synth_PurL"/>
</dbReference>
<dbReference type="InterPro" id="IPR041609">
    <property type="entry name" value="PurL_linker"/>
</dbReference>
<dbReference type="InterPro" id="IPR010918">
    <property type="entry name" value="PurM-like_C_dom"/>
</dbReference>
<dbReference type="InterPro" id="IPR036676">
    <property type="entry name" value="PurM-like_C_sf"/>
</dbReference>
<dbReference type="InterPro" id="IPR016188">
    <property type="entry name" value="PurM-like_N"/>
</dbReference>
<dbReference type="InterPro" id="IPR036921">
    <property type="entry name" value="PurM-like_N_sf"/>
</dbReference>
<dbReference type="NCBIfam" id="TIGR01736">
    <property type="entry name" value="FGAM_synth_II"/>
    <property type="match status" value="1"/>
</dbReference>
<dbReference type="NCBIfam" id="NF002290">
    <property type="entry name" value="PRK01213.1"/>
    <property type="match status" value="1"/>
</dbReference>
<dbReference type="PANTHER" id="PTHR43555">
    <property type="entry name" value="PHOSPHORIBOSYLFORMYLGLYCINAMIDINE SYNTHASE SUBUNIT PURL"/>
    <property type="match status" value="1"/>
</dbReference>
<dbReference type="PANTHER" id="PTHR43555:SF1">
    <property type="entry name" value="PHOSPHORIBOSYLFORMYLGLYCINAMIDINE SYNTHASE SUBUNIT PURL"/>
    <property type="match status" value="1"/>
</dbReference>
<dbReference type="Pfam" id="PF00586">
    <property type="entry name" value="AIRS"/>
    <property type="match status" value="2"/>
</dbReference>
<dbReference type="Pfam" id="PF02769">
    <property type="entry name" value="AIRS_C"/>
    <property type="match status" value="2"/>
</dbReference>
<dbReference type="Pfam" id="PF18072">
    <property type="entry name" value="FGAR-AT_linker"/>
    <property type="match status" value="1"/>
</dbReference>
<dbReference type="PIRSF" id="PIRSF001587">
    <property type="entry name" value="FGAM_synthase_II"/>
    <property type="match status" value="1"/>
</dbReference>
<dbReference type="SUPFAM" id="SSF56042">
    <property type="entry name" value="PurM C-terminal domain-like"/>
    <property type="match status" value="2"/>
</dbReference>
<dbReference type="SUPFAM" id="SSF55326">
    <property type="entry name" value="PurM N-terminal domain-like"/>
    <property type="match status" value="2"/>
</dbReference>
<reference key="1">
    <citation type="submission" date="2009-01" db="EMBL/GenBank/DDBJ databases">
        <title>Complete sequence of Anaeromyxobacter dehalogenans 2CP-1.</title>
        <authorList>
            <person name="Lucas S."/>
            <person name="Copeland A."/>
            <person name="Lapidus A."/>
            <person name="Glavina del Rio T."/>
            <person name="Dalin E."/>
            <person name="Tice H."/>
            <person name="Bruce D."/>
            <person name="Goodwin L."/>
            <person name="Pitluck S."/>
            <person name="Saunders E."/>
            <person name="Brettin T."/>
            <person name="Detter J.C."/>
            <person name="Han C."/>
            <person name="Larimer F."/>
            <person name="Land M."/>
            <person name="Hauser L."/>
            <person name="Kyrpides N."/>
            <person name="Ovchinnikova G."/>
            <person name="Beliaev A.S."/>
            <person name="Richardson P."/>
        </authorList>
    </citation>
    <scope>NUCLEOTIDE SEQUENCE [LARGE SCALE GENOMIC DNA]</scope>
    <source>
        <strain>2CP-1 / ATCC BAA-258</strain>
    </source>
</reference>
<accession>B8JBS8</accession>